<reference key="1">
    <citation type="journal article" date="2008" name="PLoS ONE">
        <title>Genome sequence of Brucella abortus vaccine strain S19 compared to virulent strains yields candidate virulence genes.</title>
        <authorList>
            <person name="Crasta O.R."/>
            <person name="Folkerts O."/>
            <person name="Fei Z."/>
            <person name="Mane S.P."/>
            <person name="Evans C."/>
            <person name="Martino-Catt S."/>
            <person name="Bricker B."/>
            <person name="Yu G."/>
            <person name="Du L."/>
            <person name="Sobral B.W."/>
        </authorList>
    </citation>
    <scope>NUCLEOTIDE SEQUENCE [LARGE SCALE GENOMIC DNA]</scope>
    <source>
        <strain>S19</strain>
    </source>
</reference>
<evidence type="ECO:0000255" key="1">
    <source>
        <dbReference type="HAMAP-Rule" id="MF_00122"/>
    </source>
</evidence>
<accession>B2SB61</accession>
<dbReference type="EC" id="6.3.5.-" evidence="1"/>
<dbReference type="EMBL" id="CP000888">
    <property type="protein sequence ID" value="ACD74098.1"/>
    <property type="molecule type" value="Genomic_DNA"/>
</dbReference>
<dbReference type="RefSeq" id="WP_002966038.1">
    <property type="nucleotide sequence ID" value="NC_010740.1"/>
</dbReference>
<dbReference type="SMR" id="B2SB61"/>
<dbReference type="GeneID" id="97535281"/>
<dbReference type="KEGG" id="bmc:BAbS19_II06030"/>
<dbReference type="HOGENOM" id="CLU_105899_2_0_5"/>
<dbReference type="Proteomes" id="UP000002565">
    <property type="component" value="Chromosome 2"/>
</dbReference>
<dbReference type="GO" id="GO:0050566">
    <property type="term" value="F:asparaginyl-tRNA synthase (glutamine-hydrolyzing) activity"/>
    <property type="evidence" value="ECO:0007669"/>
    <property type="project" value="RHEA"/>
</dbReference>
<dbReference type="GO" id="GO:0005524">
    <property type="term" value="F:ATP binding"/>
    <property type="evidence" value="ECO:0007669"/>
    <property type="project" value="UniProtKB-KW"/>
</dbReference>
<dbReference type="GO" id="GO:0050567">
    <property type="term" value="F:glutaminyl-tRNA synthase (glutamine-hydrolyzing) activity"/>
    <property type="evidence" value="ECO:0007669"/>
    <property type="project" value="UniProtKB-UniRule"/>
</dbReference>
<dbReference type="GO" id="GO:0070681">
    <property type="term" value="P:glutaminyl-tRNAGln biosynthesis via transamidation"/>
    <property type="evidence" value="ECO:0007669"/>
    <property type="project" value="TreeGrafter"/>
</dbReference>
<dbReference type="GO" id="GO:0006450">
    <property type="term" value="P:regulation of translational fidelity"/>
    <property type="evidence" value="ECO:0007669"/>
    <property type="project" value="InterPro"/>
</dbReference>
<dbReference type="GO" id="GO:0006412">
    <property type="term" value="P:translation"/>
    <property type="evidence" value="ECO:0007669"/>
    <property type="project" value="UniProtKB-UniRule"/>
</dbReference>
<dbReference type="Gene3D" id="1.10.20.60">
    <property type="entry name" value="Glu-tRNAGln amidotransferase C subunit, N-terminal domain"/>
    <property type="match status" value="1"/>
</dbReference>
<dbReference type="HAMAP" id="MF_00122">
    <property type="entry name" value="GatC"/>
    <property type="match status" value="1"/>
</dbReference>
<dbReference type="InterPro" id="IPR036113">
    <property type="entry name" value="Asp/Glu-ADT_sf_sub_c"/>
</dbReference>
<dbReference type="InterPro" id="IPR003837">
    <property type="entry name" value="GatC"/>
</dbReference>
<dbReference type="NCBIfam" id="TIGR00135">
    <property type="entry name" value="gatC"/>
    <property type="match status" value="1"/>
</dbReference>
<dbReference type="PANTHER" id="PTHR15004">
    <property type="entry name" value="GLUTAMYL-TRNA(GLN) AMIDOTRANSFERASE SUBUNIT C, MITOCHONDRIAL"/>
    <property type="match status" value="1"/>
</dbReference>
<dbReference type="PANTHER" id="PTHR15004:SF0">
    <property type="entry name" value="GLUTAMYL-TRNA(GLN) AMIDOTRANSFERASE SUBUNIT C, MITOCHONDRIAL"/>
    <property type="match status" value="1"/>
</dbReference>
<dbReference type="Pfam" id="PF02686">
    <property type="entry name" value="GatC"/>
    <property type="match status" value="1"/>
</dbReference>
<dbReference type="SUPFAM" id="SSF141000">
    <property type="entry name" value="Glu-tRNAGln amidotransferase C subunit"/>
    <property type="match status" value="1"/>
</dbReference>
<keyword id="KW-0067">ATP-binding</keyword>
<keyword id="KW-0436">Ligase</keyword>
<keyword id="KW-0547">Nucleotide-binding</keyword>
<keyword id="KW-0648">Protein biosynthesis</keyword>
<organism>
    <name type="scientific">Brucella abortus (strain S19)</name>
    <dbReference type="NCBI Taxonomy" id="430066"/>
    <lineage>
        <taxon>Bacteria</taxon>
        <taxon>Pseudomonadati</taxon>
        <taxon>Pseudomonadota</taxon>
        <taxon>Alphaproteobacteria</taxon>
        <taxon>Hyphomicrobiales</taxon>
        <taxon>Brucellaceae</taxon>
        <taxon>Brucella/Ochrobactrum group</taxon>
        <taxon>Brucella</taxon>
    </lineage>
</organism>
<proteinExistence type="inferred from homology"/>
<feature type="chain" id="PRO_1000095263" description="Aspartyl/glutamyl-tRNA(Asn/Gln) amidotransferase subunit C">
    <location>
        <begin position="1"/>
        <end position="95"/>
    </location>
</feature>
<name>GATC_BRUA1</name>
<sequence>MSVDISTVKRVAHLARIAVSEDDAERMTGELNAILGFVEQLNEVDVEGIEPMTSVTPMKMRMREDKVTDGGIAAAVVANAPVTEDNFFVVPKVVE</sequence>
<gene>
    <name evidence="1" type="primary">gatC</name>
    <name type="ordered locus">BAbS19_II06030</name>
</gene>
<comment type="function">
    <text evidence="1">Allows the formation of correctly charged Asn-tRNA(Asn) or Gln-tRNA(Gln) through the transamidation of misacylated Asp-tRNA(Asn) or Glu-tRNA(Gln) in organisms which lack either or both of asparaginyl-tRNA or glutaminyl-tRNA synthetases. The reaction takes place in the presence of glutamine and ATP through an activated phospho-Asp-tRNA(Asn) or phospho-Glu-tRNA(Gln).</text>
</comment>
<comment type="catalytic activity">
    <reaction evidence="1">
        <text>L-glutamyl-tRNA(Gln) + L-glutamine + ATP + H2O = L-glutaminyl-tRNA(Gln) + L-glutamate + ADP + phosphate + H(+)</text>
        <dbReference type="Rhea" id="RHEA:17521"/>
        <dbReference type="Rhea" id="RHEA-COMP:9681"/>
        <dbReference type="Rhea" id="RHEA-COMP:9684"/>
        <dbReference type="ChEBI" id="CHEBI:15377"/>
        <dbReference type="ChEBI" id="CHEBI:15378"/>
        <dbReference type="ChEBI" id="CHEBI:29985"/>
        <dbReference type="ChEBI" id="CHEBI:30616"/>
        <dbReference type="ChEBI" id="CHEBI:43474"/>
        <dbReference type="ChEBI" id="CHEBI:58359"/>
        <dbReference type="ChEBI" id="CHEBI:78520"/>
        <dbReference type="ChEBI" id="CHEBI:78521"/>
        <dbReference type="ChEBI" id="CHEBI:456216"/>
    </reaction>
</comment>
<comment type="catalytic activity">
    <reaction evidence="1">
        <text>L-aspartyl-tRNA(Asn) + L-glutamine + ATP + H2O = L-asparaginyl-tRNA(Asn) + L-glutamate + ADP + phosphate + 2 H(+)</text>
        <dbReference type="Rhea" id="RHEA:14513"/>
        <dbReference type="Rhea" id="RHEA-COMP:9674"/>
        <dbReference type="Rhea" id="RHEA-COMP:9677"/>
        <dbReference type="ChEBI" id="CHEBI:15377"/>
        <dbReference type="ChEBI" id="CHEBI:15378"/>
        <dbReference type="ChEBI" id="CHEBI:29985"/>
        <dbReference type="ChEBI" id="CHEBI:30616"/>
        <dbReference type="ChEBI" id="CHEBI:43474"/>
        <dbReference type="ChEBI" id="CHEBI:58359"/>
        <dbReference type="ChEBI" id="CHEBI:78515"/>
        <dbReference type="ChEBI" id="CHEBI:78516"/>
        <dbReference type="ChEBI" id="CHEBI:456216"/>
    </reaction>
</comment>
<comment type="subunit">
    <text evidence="1">Heterotrimer of A, B and C subunits.</text>
</comment>
<comment type="similarity">
    <text evidence="1">Belongs to the GatC family.</text>
</comment>
<protein>
    <recommendedName>
        <fullName evidence="1">Aspartyl/glutamyl-tRNA(Asn/Gln) amidotransferase subunit C</fullName>
        <shortName evidence="1">Asp/Glu-ADT subunit C</shortName>
        <ecNumber evidence="1">6.3.5.-</ecNumber>
    </recommendedName>
</protein>